<name>SC5A1_RABIT</name>
<accession>P11170</accession>
<protein>
    <recommendedName>
        <fullName evidence="2">Sodium/glucose cotransporter 1</fullName>
        <shortName>Na(+)/glucose cotransporter 1</shortName>
    </recommendedName>
    <alternativeName>
        <fullName>High affinity sodium-glucose cotransporter</fullName>
    </alternativeName>
    <alternativeName>
        <fullName>Solute carrier family 5 member 1</fullName>
    </alternativeName>
</protein>
<feature type="chain" id="PRO_0000105369" description="Sodium/glucose cotransporter 1">
    <location>
        <begin position="1"/>
        <end position="662"/>
    </location>
</feature>
<feature type="topological domain" description="Extracellular" evidence="2">
    <location>
        <begin position="1"/>
        <end position="24"/>
    </location>
</feature>
<feature type="transmembrane region" description="Helical; Name=TM0" evidence="2">
    <location>
        <begin position="25"/>
        <end position="47"/>
    </location>
</feature>
<feature type="topological domain" description="Cytoplasmic" evidence="2">
    <location>
        <begin position="48"/>
        <end position="66"/>
    </location>
</feature>
<feature type="transmembrane region" description="Helical; Name=TM1" evidence="2">
    <location>
        <begin position="67"/>
        <end position="90"/>
    </location>
</feature>
<feature type="topological domain" description="Extracellular" evidence="2">
    <location>
        <begin position="91"/>
        <end position="95"/>
    </location>
</feature>
<feature type="transmembrane region" description="Helical; Name=TM2" evidence="2">
    <location>
        <begin position="96"/>
        <end position="117"/>
    </location>
</feature>
<feature type="topological domain" description="Cytoplasmic" evidence="2">
    <location>
        <begin position="118"/>
        <end position="139"/>
    </location>
</feature>
<feature type="transmembrane region" description="Helical; Name=TM3" evidence="2">
    <location>
        <begin position="140"/>
        <end position="169"/>
    </location>
</feature>
<feature type="topological domain" description="Extracellular" evidence="2">
    <location>
        <begin position="170"/>
        <end position="176"/>
    </location>
</feature>
<feature type="transmembrane region" description="Helical; Name=TM4" evidence="2">
    <location>
        <begin position="177"/>
        <end position="193"/>
    </location>
</feature>
<feature type="topological domain" description="Cytoplasmic" evidence="2">
    <location>
        <begin position="194"/>
        <end position="202"/>
    </location>
</feature>
<feature type="transmembrane region" description="Helical; Name=TM5" evidence="2">
    <location>
        <begin position="203"/>
        <end position="221"/>
    </location>
</feature>
<feature type="topological domain" description="Extracellular" evidence="2">
    <location>
        <begin position="222"/>
        <end position="275"/>
    </location>
</feature>
<feature type="transmembrane region" description="Helical; Name=TM6" evidence="2">
    <location>
        <begin position="276"/>
        <end position="295"/>
    </location>
</feature>
<feature type="topological domain" description="Cytoplasmic" evidence="2">
    <location>
        <begin position="296"/>
        <end position="309"/>
    </location>
</feature>
<feature type="transmembrane region" description="Helical; Name=TM7" evidence="2">
    <location>
        <begin position="310"/>
        <end position="331"/>
    </location>
</feature>
<feature type="topological domain" description="Extracellular" evidence="2">
    <location>
        <begin position="332"/>
        <end position="375"/>
    </location>
</feature>
<feature type="transmembrane region" description="Helical; Name=TM8" evidence="2">
    <location>
        <begin position="376"/>
        <end position="406"/>
    </location>
</feature>
<feature type="topological domain" description="Cytoplasmic" evidence="2">
    <location>
        <begin position="407"/>
        <end position="422"/>
    </location>
</feature>
<feature type="transmembrane region" description="Helical; Name=TM9" evidence="2">
    <location>
        <begin position="423"/>
        <end position="444"/>
    </location>
</feature>
<feature type="topological domain" description="Extracellular" evidence="2">
    <location>
        <begin position="445"/>
        <end position="451"/>
    </location>
</feature>
<feature type="transmembrane region" description="Helical; Name=TM10" evidence="2">
    <location>
        <begin position="452"/>
        <end position="477"/>
    </location>
</feature>
<feature type="topological domain" description="Cytoplasmic" evidence="2">
    <location>
        <begin position="478"/>
        <end position="481"/>
    </location>
</feature>
<feature type="transmembrane region" description="Helical; Name=TM11" evidence="2">
    <location>
        <begin position="482"/>
        <end position="504"/>
    </location>
</feature>
<feature type="topological domain" description="Extracellular" evidence="2">
    <location>
        <begin position="505"/>
        <end position="525"/>
    </location>
</feature>
<feature type="transmembrane region" description="Helical; Name=TM12" evidence="2">
    <location>
        <begin position="526"/>
        <end position="547"/>
    </location>
</feature>
<feature type="topological domain" description="Cytoplasmic" evidence="2">
    <location>
        <begin position="548"/>
        <end position="642"/>
    </location>
</feature>
<feature type="transmembrane region" description="Helical; Name=TM13" evidence="2">
    <location>
        <begin position="643"/>
        <end position="660"/>
    </location>
</feature>
<feature type="topological domain" description="Extracellular" evidence="2">
    <location>
        <begin position="661"/>
        <end position="662"/>
    </location>
</feature>
<feature type="binding site" evidence="8">
    <location>
        <position position="457"/>
    </location>
    <ligand>
        <name>D-glucose</name>
        <dbReference type="ChEBI" id="CHEBI:4167"/>
    </ligand>
</feature>
<feature type="site" description="Implicated in sodium coupling" evidence="1">
    <location>
        <position position="43"/>
    </location>
</feature>
<feature type="site" description="Implicated in sodium coupling" evidence="1">
    <location>
        <position position="300"/>
    </location>
</feature>
<feature type="site" description="Involved in sugar-binding/transport and inhibitor binding">
    <location>
        <position position="460"/>
    </location>
</feature>
<feature type="glycosylation site" description="N-linked (GlcNAc...) asparagine" evidence="4">
    <location>
        <position position="248"/>
    </location>
</feature>
<feature type="disulfide bond" evidence="5">
    <location>
        <begin position="255"/>
        <end position="608"/>
    </location>
</feature>
<feature type="disulfide bond" evidence="2">
    <location>
        <begin position="255"/>
        <end position="511"/>
    </location>
</feature>
<feature type="disulfide bond" evidence="2">
    <location>
        <begin position="345"/>
        <end position="351"/>
    </location>
</feature>
<feature type="disulfide bond" evidence="2">
    <location>
        <begin position="355"/>
        <end position="361"/>
    </location>
</feature>
<feature type="disulfide bond" evidence="2">
    <location>
        <begin position="517"/>
        <end position="522"/>
    </location>
</feature>
<feature type="mutagenesis site" description="Drasticly decreased affinity for glucose and phlorizin." evidence="6">
    <original>Q</original>
    <variation>W</variation>
    <location>
        <position position="457"/>
    </location>
</feature>
<feature type="mutagenesis site" description="Decreased affinity for glucose and phlorizin." evidence="6">
    <original>T</original>
    <variation>W</variation>
    <location>
        <position position="460"/>
    </location>
</feature>
<dbReference type="EMBL" id="X06419">
    <property type="protein sequence ID" value="CAA29727.1"/>
    <property type="molecule type" value="mRNA"/>
</dbReference>
<dbReference type="EMBL" id="X55355">
    <property type="protein sequence ID" value="CAA39040.1"/>
    <property type="molecule type" value="mRNA"/>
</dbReference>
<dbReference type="PIR" id="S00515">
    <property type="entry name" value="A37226"/>
</dbReference>
<dbReference type="RefSeq" id="NP_001095162.1">
    <property type="nucleotide sequence ID" value="NM_001101692.1"/>
</dbReference>
<dbReference type="SMR" id="P11170"/>
<dbReference type="FunCoup" id="P11170">
    <property type="interactions" value="15"/>
</dbReference>
<dbReference type="STRING" id="9986.ENSOCUP00000015091"/>
<dbReference type="GlyCosmos" id="P11170">
    <property type="glycosylation" value="1 site, No reported glycans"/>
</dbReference>
<dbReference type="PaxDb" id="9986-ENSOCUP00000015091"/>
<dbReference type="GeneID" id="100009262"/>
<dbReference type="KEGG" id="ocu:100009262"/>
<dbReference type="CTD" id="6523"/>
<dbReference type="eggNOG" id="KOG2349">
    <property type="taxonomic scope" value="Eukaryota"/>
</dbReference>
<dbReference type="InParanoid" id="P11170"/>
<dbReference type="OrthoDB" id="6132759at2759"/>
<dbReference type="PRO" id="PR:P11170"/>
<dbReference type="Proteomes" id="UP000001811">
    <property type="component" value="Unplaced"/>
</dbReference>
<dbReference type="GO" id="GO:0016324">
    <property type="term" value="C:apical plasma membrane"/>
    <property type="evidence" value="ECO:0000250"/>
    <property type="project" value="UniProtKB"/>
</dbReference>
<dbReference type="GO" id="GO:0015151">
    <property type="term" value="F:alpha-glucoside transmembrane transporter activity"/>
    <property type="evidence" value="ECO:0000314"/>
    <property type="project" value="ARUK-UCL"/>
</dbReference>
<dbReference type="GO" id="GO:0005412">
    <property type="term" value="F:D-glucose:sodium symporter activity"/>
    <property type="evidence" value="ECO:0000314"/>
    <property type="project" value="ARUK-UCL"/>
</dbReference>
<dbReference type="GO" id="GO:0015150">
    <property type="term" value="F:fucose transmembrane transporter activity"/>
    <property type="evidence" value="ECO:0000314"/>
    <property type="project" value="ARUK-UCL"/>
</dbReference>
<dbReference type="GO" id="GO:0005354">
    <property type="term" value="F:galactose transmembrane transporter activity"/>
    <property type="evidence" value="ECO:0000314"/>
    <property type="project" value="ARUK-UCL"/>
</dbReference>
<dbReference type="GO" id="GO:0015371">
    <property type="term" value="F:galactose:sodium symporter activity"/>
    <property type="evidence" value="ECO:0000250"/>
    <property type="project" value="UniProtKB"/>
</dbReference>
<dbReference type="GO" id="GO:0005367">
    <property type="term" value="F:myo-inositol:sodium symporter activity"/>
    <property type="evidence" value="ECO:0000314"/>
    <property type="project" value="ARUK-UCL"/>
</dbReference>
<dbReference type="GO" id="GO:0015146">
    <property type="term" value="F:pentose transmembrane transporter activity"/>
    <property type="evidence" value="ECO:0000314"/>
    <property type="project" value="ARUK-UCL"/>
</dbReference>
<dbReference type="GO" id="GO:0005372">
    <property type="term" value="F:water transmembrane transporter activity"/>
    <property type="evidence" value="ECO:0000250"/>
    <property type="project" value="UniProtKB"/>
</dbReference>
<dbReference type="GO" id="GO:0000017">
    <property type="term" value="P:alpha-glucoside transport"/>
    <property type="evidence" value="ECO:0000314"/>
    <property type="project" value="ARUK-UCL"/>
</dbReference>
<dbReference type="GO" id="GO:1904659">
    <property type="term" value="P:D-glucose transmembrane transport"/>
    <property type="evidence" value="ECO:0000314"/>
    <property type="project" value="ARUK-UCL"/>
</dbReference>
<dbReference type="GO" id="GO:0015756">
    <property type="term" value="P:fucose transmembrane transport"/>
    <property type="evidence" value="ECO:0000314"/>
    <property type="project" value="ARUK-UCL"/>
</dbReference>
<dbReference type="GO" id="GO:0015757">
    <property type="term" value="P:galactose transmembrane transport"/>
    <property type="evidence" value="ECO:0000314"/>
    <property type="project" value="ARUK-UCL"/>
</dbReference>
<dbReference type="GO" id="GO:0001951">
    <property type="term" value="P:intestinal D-glucose absorption"/>
    <property type="evidence" value="ECO:0000250"/>
    <property type="project" value="UniProtKB"/>
</dbReference>
<dbReference type="GO" id="GO:0015798">
    <property type="term" value="P:myo-inositol transport"/>
    <property type="evidence" value="ECO:0000314"/>
    <property type="project" value="ARUK-UCL"/>
</dbReference>
<dbReference type="GO" id="GO:0015750">
    <property type="term" value="P:pentose transmembrane transport"/>
    <property type="evidence" value="ECO:0000314"/>
    <property type="project" value="ARUK-UCL"/>
</dbReference>
<dbReference type="GO" id="GO:0035623">
    <property type="term" value="P:renal D-glucose absorption"/>
    <property type="evidence" value="ECO:0000250"/>
    <property type="project" value="UniProtKB"/>
</dbReference>
<dbReference type="FunFam" id="1.20.1730.10:FF:000005">
    <property type="entry name" value="sodium/glucose cotransporter 1 isoform X1"/>
    <property type="match status" value="1"/>
</dbReference>
<dbReference type="Gene3D" id="1.20.1730.10">
    <property type="entry name" value="Sodium/glucose cotransporter"/>
    <property type="match status" value="1"/>
</dbReference>
<dbReference type="InterPro" id="IPR038377">
    <property type="entry name" value="Na/Glc_symporter_sf"/>
</dbReference>
<dbReference type="InterPro" id="IPR001734">
    <property type="entry name" value="Na/solute_symporter"/>
</dbReference>
<dbReference type="InterPro" id="IPR018212">
    <property type="entry name" value="Na/solute_symporter_CS"/>
</dbReference>
<dbReference type="NCBIfam" id="TIGR00813">
    <property type="entry name" value="sss"/>
    <property type="match status" value="1"/>
</dbReference>
<dbReference type="PANTHER" id="PTHR11819:SF151">
    <property type="entry name" value="SODIUM_GLUCOSE COTRANSPORTER 1"/>
    <property type="match status" value="1"/>
</dbReference>
<dbReference type="PANTHER" id="PTHR11819">
    <property type="entry name" value="SOLUTE CARRIER FAMILY 5"/>
    <property type="match status" value="1"/>
</dbReference>
<dbReference type="Pfam" id="PF00474">
    <property type="entry name" value="SSF"/>
    <property type="match status" value="1"/>
</dbReference>
<dbReference type="PROSITE" id="PS00456">
    <property type="entry name" value="NA_SOLUT_SYMP_1"/>
    <property type="match status" value="1"/>
</dbReference>
<dbReference type="PROSITE" id="PS00457">
    <property type="entry name" value="NA_SOLUT_SYMP_2"/>
    <property type="match status" value="1"/>
</dbReference>
<dbReference type="PROSITE" id="PS50283">
    <property type="entry name" value="NA_SOLUT_SYMP_3"/>
    <property type="match status" value="1"/>
</dbReference>
<keyword id="KW-1003">Cell membrane</keyword>
<keyword id="KW-1015">Disulfide bond</keyword>
<keyword id="KW-0325">Glycoprotein</keyword>
<keyword id="KW-0406">Ion transport</keyword>
<keyword id="KW-0472">Membrane</keyword>
<keyword id="KW-1185">Reference proteome</keyword>
<keyword id="KW-0915">Sodium</keyword>
<keyword id="KW-0739">Sodium transport</keyword>
<keyword id="KW-0762">Sugar transport</keyword>
<keyword id="KW-0769">Symport</keyword>
<keyword id="KW-0812">Transmembrane</keyword>
<keyword id="KW-1133">Transmembrane helix</keyword>
<keyword id="KW-0813">Transport</keyword>
<gene>
    <name type="primary">SLC5A1</name>
    <name evidence="2" type="synonym">SGLT1</name>
</gene>
<organism>
    <name type="scientific">Oryctolagus cuniculus</name>
    <name type="common">Rabbit</name>
    <dbReference type="NCBI Taxonomy" id="9986"/>
    <lineage>
        <taxon>Eukaryota</taxon>
        <taxon>Metazoa</taxon>
        <taxon>Chordata</taxon>
        <taxon>Craniata</taxon>
        <taxon>Vertebrata</taxon>
        <taxon>Euteleostomi</taxon>
        <taxon>Mammalia</taxon>
        <taxon>Eutheria</taxon>
        <taxon>Euarchontoglires</taxon>
        <taxon>Glires</taxon>
        <taxon>Lagomorpha</taxon>
        <taxon>Leporidae</taxon>
        <taxon>Oryctolagus</taxon>
    </lineage>
</organism>
<proteinExistence type="evidence at protein level"/>
<reference key="1">
    <citation type="journal article" date="1987" name="Nature">
        <title>Expression cloning and cDNA sequencing of the Na+/glucose co-transporter.</title>
        <authorList>
            <person name="Hediger M.A."/>
            <person name="Coady M.J."/>
            <person name="Ikeda T.S."/>
            <person name="Wright E.M."/>
        </authorList>
    </citation>
    <scope>NUCLEOTIDE SEQUENCE [MRNA]</scope>
    <source>
        <strain>New Zealand white</strain>
    </source>
</reference>
<reference key="2">
    <citation type="journal article" date="1991" name="Biochim. Biophys. Acta">
        <title>Sequence comparison of the sodium-D-glucose cotransport systems in rabbit renal and intestinal epithelia.</title>
        <authorList>
            <person name="Morrison A.I."/>
            <person name="Panayotova-Heiermann M."/>
            <person name="Feigl G."/>
            <person name="Schoelermann B."/>
            <person name="Kinne R.K.H."/>
        </authorList>
    </citation>
    <scope>NUCLEOTIDE SEQUENCE [MRNA]</scope>
    <source>
        <strain>New Zealand white</strain>
        <tissue>Kidney cortex</tissue>
    </source>
</reference>
<reference key="3">
    <citation type="journal article" date="1990" name="Am. J. Physiol.">
        <title>Sequence homologies among intestinal and renal Na+/glucose cotransporters.</title>
        <authorList>
            <person name="Coady M.J."/>
            <person name="Pajor A.M."/>
            <person name="Wright E.M."/>
        </authorList>
    </citation>
    <scope>NUCLEOTIDE SEQUENCE [MRNA] OF 178-662</scope>
    <scope>TISSUE SPECIFICITY</scope>
</reference>
<reference key="4">
    <citation type="journal article" date="2007" name="J. Biol. Chem.">
        <title>Three surface subdomains form the vestibule of the Na+/glucose cotransporter SGLT1.</title>
        <authorList>
            <person name="Puntheeranurak T."/>
            <person name="Kasch M."/>
            <person name="Xia X."/>
            <person name="Hinterdorfer P."/>
            <person name="Kinne R.K."/>
        </authorList>
    </citation>
    <scope>TOPOLOGY</scope>
    <scope>DISULFIDE BOND</scope>
</reference>
<reference key="5">
    <citation type="journal article" date="2011" name="Biochim. Biophys. Acta">
        <title>A biophysical glance at the outer surface of the membrane transporter SGLT1.</title>
        <authorList>
            <person name="Tyagi N.K."/>
            <person name="Puntheeranurak T."/>
            <person name="Raja M."/>
            <person name="Kumar A."/>
            <person name="Wimmer B."/>
            <person name="Neundlinger I."/>
            <person name="Gruber H."/>
            <person name="Hinterdorfer P."/>
            <person name="Kinne R.K."/>
        </authorList>
    </citation>
    <scope>TOPOLOGY</scope>
    <scope>SUBSTRATE-BINDING SITE</scope>
    <scope>MUTAGENESIS OF GLN-457 AND THR-460</scope>
</reference>
<evidence type="ECO:0000250" key="1"/>
<evidence type="ECO:0000250" key="2">
    <source>
        <dbReference type="UniProtKB" id="P13866"/>
    </source>
</evidence>
<evidence type="ECO:0000250" key="3">
    <source>
        <dbReference type="UniProtKB" id="Q8C3K6"/>
    </source>
</evidence>
<evidence type="ECO:0000255" key="4"/>
<evidence type="ECO:0000269" key="5">
    <source>
    </source>
</evidence>
<evidence type="ECO:0000269" key="6">
    <source>
    </source>
</evidence>
<evidence type="ECO:0000269" key="7">
    <source>
    </source>
</evidence>
<evidence type="ECO:0000305" key="8"/>
<comment type="function">
    <text evidence="2 3">Electrogenic Na(+)-coupled sugar symporter that actively transports D-glucose or D-galactose at the plasma membrane, with a Na(+) to sugar coupling ratio of 2:1. Transporter activity is driven by a transmembrane Na(+) electrochemical gradient set by the Na(+)/K(+) pump (By similarity). Has a primary role in the transport of dietary monosaccharides from enterocytes to blood. Responsible for the absorption of D-glucose or D-galactose across the apical brush-border membrane of enterocytes, whereas basolateral exit is provided by GLUT2. Additionally, functions as a D-glucose sensor in enteroendocrine cells, triggering the secretion of the incretins GCG and GIP that control food intake and energy homeostasis (By similarity). Together with SGLT2, functions in reabsorption of D-glucose from glomerular filtrate, playing a nonredundant role in the S3 segment of the proximal tubules (By similarity). Transports D-glucose into endometrial epithelial cells, controlling glycogen synthesis and nutritional support for the embryo as well as the decidual transformation of endometrium prior to conception (By similarity). Acts as a water channel enabling passive water transport in response to the osmotic gradient created upon sugar and Na(+) uptake. Has high water conductivity comparable to aquaporins and therefore is expected to play an important role in transepithelial water permeability, especially in the small intestine.</text>
</comment>
<comment type="catalytic activity">
    <reaction evidence="2">
        <text>D-glucose(out) + 2 Na(+)(out) = D-glucose(in) + 2 Na(+)(in)</text>
        <dbReference type="Rhea" id="RHEA:70495"/>
        <dbReference type="ChEBI" id="CHEBI:4167"/>
        <dbReference type="ChEBI" id="CHEBI:29101"/>
    </reaction>
    <physiologicalReaction direction="left-to-right" evidence="2">
        <dbReference type="Rhea" id="RHEA:70496"/>
    </physiologicalReaction>
</comment>
<comment type="catalytic activity">
    <reaction evidence="2">
        <text>D-galactose(out) + 2 Na(+)(out) = D-galactose(in) + 2 Na(+)(in)</text>
        <dbReference type="Rhea" id="RHEA:70499"/>
        <dbReference type="ChEBI" id="CHEBI:4139"/>
        <dbReference type="ChEBI" id="CHEBI:29101"/>
    </reaction>
    <physiologicalReaction direction="left-to-right" evidence="2">
        <dbReference type="Rhea" id="RHEA:70500"/>
    </physiologicalReaction>
</comment>
<comment type="activity regulation">
    <text evidence="2">Enhanced by the interaction with PDZK1IP1/MAP17; but unlike SLC5A2/SGLT2, PDZK1IP1 is not essential for SLC5A1 transporter activity (By similarity). Possibly modulated by cholesterol binding (By similarity).</text>
</comment>
<comment type="subcellular location">
    <subcellularLocation>
        <location evidence="3">Apical cell membrane</location>
        <topology evidence="2">Multi-pass membrane protein</topology>
    </subcellularLocation>
</comment>
<comment type="tissue specificity">
    <text evidence="7">Found predominantly in intestine, renal cortex and in outer renal medulla.</text>
</comment>
<comment type="domain">
    <text evidence="2">The cholesterol-binding site is formed by transmembrane helices TM1, TM7 and TM13.</text>
</comment>
<comment type="PTM">
    <text evidence="2">N-glycosylation is not necessary for the cotransporter function.</text>
</comment>
<comment type="disease">
    <text>Mutation of Asp-28 is implicated in glucose/galactose malabsorption.</text>
</comment>
<comment type="similarity">
    <text evidence="8">Belongs to the sodium:solute symporter (SSF) (TC 2.A.21) family.</text>
</comment>
<sequence>MDSSTLSPLTTSTAAPLESYERIRNAADISVIVIYFLVVMAVGLWAMFSTNRGTVGGFFLAGRSMVWWPIGASLFASNIGSGHFVGLAGTGAASGIATGGFEWNALIMVVVLGWVFVPIYIRAGVVTMPEYLQKRFGGKRIQIYLSILSLLLYIFTKISADIFSGAIFIQLTLGLDIYVAIIILLVITGLYTITGGLAAVIYTDTLQTAIMMVGSVILTGFAFHEVGGYEAFTEKYMRAIPSQISYGNTSIPQKCYTPREDAFHIFRDAITGDIPWPGLVFGMSILTLWYWCTDQVIVQRCLSAKNLSHVKAGCILCGYLKVMPMFLIVMMGMVSRILYTDKVACVVPSECERYCGTRVGCTNIAFPTLVVELMPNGLRGLMLSVMMASLMSSLTSIFNSASTLFTMDIYTKIRKKASEKELMIAGRLFMLFLIGISIAWVPIVQSAQSGQLFDYIQSITSYLGPPIAAVFLLAIFWKRVNEPGAFWGLVLGFLIGISRMITEFAYGTGSCMEPSNCPTIICGVHYLYFAIILFVISIITVVVVSLFTKPIPDVHLYRLCWSLRNSKEERIDLDAGEEDIQEAPEEATDTEVPKKKKGFFRRAYDLFCGLDQDKGPKMTKEEEAAMKLKLTDTSEHPLWRTVVNINGVILLAVAVFCYAYFA</sequence>